<accession>Q4P9T2</accession>
<accession>A0A0D1CPR6</accession>
<organism>
    <name type="scientific">Mycosarcoma maydis</name>
    <name type="common">Corn smut fungus</name>
    <name type="synonym">Ustilago maydis</name>
    <dbReference type="NCBI Taxonomy" id="5270"/>
    <lineage>
        <taxon>Eukaryota</taxon>
        <taxon>Fungi</taxon>
        <taxon>Dikarya</taxon>
        <taxon>Basidiomycota</taxon>
        <taxon>Ustilaginomycotina</taxon>
        <taxon>Ustilaginomycetes</taxon>
        <taxon>Ustilaginales</taxon>
        <taxon>Ustilaginaceae</taxon>
        <taxon>Mycosarcoma</taxon>
    </lineage>
</organism>
<name>SSN3_MYCMD</name>
<protein>
    <recommendedName>
        <fullName>Serine/threonine-protein kinase SSN3</fullName>
        <ecNumber>2.7.11.22</ecNumber>
        <ecNumber>2.7.11.23</ecNumber>
    </recommendedName>
    <alternativeName>
        <fullName>Cyclin-dependent kinase 8</fullName>
    </alternativeName>
</protein>
<reference key="1">
    <citation type="journal article" date="2006" name="Nature">
        <title>Insights from the genome of the biotrophic fungal plant pathogen Ustilago maydis.</title>
        <authorList>
            <person name="Kaemper J."/>
            <person name="Kahmann R."/>
            <person name="Boelker M."/>
            <person name="Ma L.-J."/>
            <person name="Brefort T."/>
            <person name="Saville B.J."/>
            <person name="Banuett F."/>
            <person name="Kronstad J.W."/>
            <person name="Gold S.E."/>
            <person name="Mueller O."/>
            <person name="Perlin M.H."/>
            <person name="Woesten H.A.B."/>
            <person name="de Vries R."/>
            <person name="Ruiz-Herrera J."/>
            <person name="Reynaga-Pena C.G."/>
            <person name="Snetselaar K."/>
            <person name="McCann M."/>
            <person name="Perez-Martin J."/>
            <person name="Feldbruegge M."/>
            <person name="Basse C.W."/>
            <person name="Steinberg G."/>
            <person name="Ibeas J.I."/>
            <person name="Holloman W."/>
            <person name="Guzman P."/>
            <person name="Farman M.L."/>
            <person name="Stajich J.E."/>
            <person name="Sentandreu R."/>
            <person name="Gonzalez-Prieto J.M."/>
            <person name="Kennell J.C."/>
            <person name="Molina L."/>
            <person name="Schirawski J."/>
            <person name="Mendoza-Mendoza A."/>
            <person name="Greilinger D."/>
            <person name="Muench K."/>
            <person name="Roessel N."/>
            <person name="Scherer M."/>
            <person name="Vranes M."/>
            <person name="Ladendorf O."/>
            <person name="Vincon V."/>
            <person name="Fuchs U."/>
            <person name="Sandrock B."/>
            <person name="Meng S."/>
            <person name="Ho E.C.H."/>
            <person name="Cahill M.J."/>
            <person name="Boyce K.J."/>
            <person name="Klose J."/>
            <person name="Klosterman S.J."/>
            <person name="Deelstra H.J."/>
            <person name="Ortiz-Castellanos L."/>
            <person name="Li W."/>
            <person name="Sanchez-Alonso P."/>
            <person name="Schreier P.H."/>
            <person name="Haeuser-Hahn I."/>
            <person name="Vaupel M."/>
            <person name="Koopmann E."/>
            <person name="Friedrich G."/>
            <person name="Voss H."/>
            <person name="Schlueter T."/>
            <person name="Margolis J."/>
            <person name="Platt D."/>
            <person name="Swimmer C."/>
            <person name="Gnirke A."/>
            <person name="Chen F."/>
            <person name="Vysotskaia V."/>
            <person name="Mannhaupt G."/>
            <person name="Gueldener U."/>
            <person name="Muensterkoetter M."/>
            <person name="Haase D."/>
            <person name="Oesterheld M."/>
            <person name="Mewes H.-W."/>
            <person name="Mauceli E.W."/>
            <person name="DeCaprio D."/>
            <person name="Wade C.M."/>
            <person name="Butler J."/>
            <person name="Young S.K."/>
            <person name="Jaffe D.B."/>
            <person name="Calvo S.E."/>
            <person name="Nusbaum C."/>
            <person name="Galagan J.E."/>
            <person name="Birren B.W."/>
        </authorList>
    </citation>
    <scope>NUCLEOTIDE SEQUENCE [LARGE SCALE GENOMIC DNA]</scope>
    <source>
        <strain>DSM 14603 / FGSC 9021 / UM521</strain>
    </source>
</reference>
<reference key="2">
    <citation type="submission" date="2014-09" db="EMBL/GenBank/DDBJ databases">
        <authorList>
            <person name="Gueldener U."/>
            <person name="Muensterkoetter M."/>
            <person name="Walter M.C."/>
            <person name="Mannhaupt G."/>
            <person name="Kahmann R."/>
        </authorList>
    </citation>
    <scope>GENOME REANNOTATION</scope>
    <source>
        <strain>DSM 14603 / FGSC 9021 / UM521</strain>
    </source>
</reference>
<gene>
    <name type="primary">SSN3</name>
    <name type="synonym">CDK8</name>
    <name type="ORF">UMAG_12208</name>
</gene>
<comment type="function">
    <text evidence="1">Component of the srb8-11 complex. The srb8-11 complex is a regulatory module of the Mediator complex which is itself dependent transcription. The srb8-11 complex may be involved in the transcriptional repression of a subset of genes regulated by Mediator. It may inhibit the association of the Mediator complex with RNA polymerase II to form the holoenzyme complex. The srb8-11 complex phosphorylates the C-terminal domain (CTD) of the largest subunit of RNA polymerase II (By similarity).</text>
</comment>
<comment type="catalytic activity">
    <reaction>
        <text>L-seryl-[protein] + ATP = O-phospho-L-seryl-[protein] + ADP + H(+)</text>
        <dbReference type="Rhea" id="RHEA:17989"/>
        <dbReference type="Rhea" id="RHEA-COMP:9863"/>
        <dbReference type="Rhea" id="RHEA-COMP:11604"/>
        <dbReference type="ChEBI" id="CHEBI:15378"/>
        <dbReference type="ChEBI" id="CHEBI:29999"/>
        <dbReference type="ChEBI" id="CHEBI:30616"/>
        <dbReference type="ChEBI" id="CHEBI:83421"/>
        <dbReference type="ChEBI" id="CHEBI:456216"/>
        <dbReference type="EC" id="2.7.11.22"/>
    </reaction>
</comment>
<comment type="catalytic activity">
    <reaction>
        <text>L-threonyl-[protein] + ATP = O-phospho-L-threonyl-[protein] + ADP + H(+)</text>
        <dbReference type="Rhea" id="RHEA:46608"/>
        <dbReference type="Rhea" id="RHEA-COMP:11060"/>
        <dbReference type="Rhea" id="RHEA-COMP:11605"/>
        <dbReference type="ChEBI" id="CHEBI:15378"/>
        <dbReference type="ChEBI" id="CHEBI:30013"/>
        <dbReference type="ChEBI" id="CHEBI:30616"/>
        <dbReference type="ChEBI" id="CHEBI:61977"/>
        <dbReference type="ChEBI" id="CHEBI:456216"/>
        <dbReference type="EC" id="2.7.11.22"/>
    </reaction>
</comment>
<comment type="catalytic activity">
    <reaction>
        <text>[DNA-directed RNA polymerase] + ATP = phospho-[DNA-directed RNA polymerase] + ADP + H(+)</text>
        <dbReference type="Rhea" id="RHEA:10216"/>
        <dbReference type="Rhea" id="RHEA-COMP:11321"/>
        <dbReference type="Rhea" id="RHEA-COMP:11322"/>
        <dbReference type="ChEBI" id="CHEBI:15378"/>
        <dbReference type="ChEBI" id="CHEBI:30616"/>
        <dbReference type="ChEBI" id="CHEBI:43176"/>
        <dbReference type="ChEBI" id="CHEBI:68546"/>
        <dbReference type="ChEBI" id="CHEBI:456216"/>
        <dbReference type="EC" id="2.7.11.23"/>
    </reaction>
</comment>
<comment type="cofactor">
    <cofactor evidence="1">
        <name>Mg(2+)</name>
        <dbReference type="ChEBI" id="CHEBI:18420"/>
    </cofactor>
</comment>
<comment type="subunit">
    <text evidence="1">Component of the srb8-11 complex, a regulatory module of the Mediator complex.</text>
</comment>
<comment type="subcellular location">
    <subcellularLocation>
        <location evidence="4">Nucleus</location>
    </subcellularLocation>
</comment>
<comment type="similarity">
    <text evidence="4">Belongs to the protein kinase superfamily. CMGC Ser/Thr protein kinase family. CDC2/CDKX subfamily.</text>
</comment>
<dbReference type="EC" id="2.7.11.22"/>
<dbReference type="EC" id="2.7.11.23"/>
<dbReference type="EMBL" id="CM003147">
    <property type="protein sequence ID" value="KIS68558.1"/>
    <property type="molecule type" value="Genomic_DNA"/>
</dbReference>
<dbReference type="RefSeq" id="XP_011389845.1">
    <property type="nucleotide sequence ID" value="XM_011391543.1"/>
</dbReference>
<dbReference type="SMR" id="Q4P9T2"/>
<dbReference type="STRING" id="237631.Q4P9T2"/>
<dbReference type="EnsemblFungi" id="KIS68558">
    <property type="protein sequence ID" value="KIS68558"/>
    <property type="gene ID" value="UMAG_12208"/>
</dbReference>
<dbReference type="GeneID" id="23567961"/>
<dbReference type="KEGG" id="uma:UMAG_12208"/>
<dbReference type="VEuPathDB" id="FungiDB:UMAG_12208"/>
<dbReference type="eggNOG" id="KOG0666">
    <property type="taxonomic scope" value="Eukaryota"/>
</dbReference>
<dbReference type="HOGENOM" id="CLU_000288_181_6_1"/>
<dbReference type="InParanoid" id="Q4P9T2"/>
<dbReference type="OrthoDB" id="6284126at2759"/>
<dbReference type="Proteomes" id="UP000000561">
    <property type="component" value="Chromosome 8"/>
</dbReference>
<dbReference type="GO" id="GO:0016592">
    <property type="term" value="C:mediator complex"/>
    <property type="evidence" value="ECO:0000318"/>
    <property type="project" value="GO_Central"/>
</dbReference>
<dbReference type="GO" id="GO:0005634">
    <property type="term" value="C:nucleus"/>
    <property type="evidence" value="ECO:0000318"/>
    <property type="project" value="GO_Central"/>
</dbReference>
<dbReference type="GO" id="GO:0005524">
    <property type="term" value="F:ATP binding"/>
    <property type="evidence" value="ECO:0007669"/>
    <property type="project" value="UniProtKB-KW"/>
</dbReference>
<dbReference type="GO" id="GO:0004693">
    <property type="term" value="F:cyclin-dependent protein serine/threonine kinase activity"/>
    <property type="evidence" value="ECO:0000318"/>
    <property type="project" value="GO_Central"/>
</dbReference>
<dbReference type="GO" id="GO:0046872">
    <property type="term" value="F:metal ion binding"/>
    <property type="evidence" value="ECO:0007669"/>
    <property type="project" value="UniProtKB-KW"/>
</dbReference>
<dbReference type="GO" id="GO:0106310">
    <property type="term" value="F:protein serine kinase activity"/>
    <property type="evidence" value="ECO:0007669"/>
    <property type="project" value="RHEA"/>
</dbReference>
<dbReference type="GO" id="GO:0008353">
    <property type="term" value="F:RNA polymerase II CTD heptapeptide repeat kinase activity"/>
    <property type="evidence" value="ECO:0007669"/>
    <property type="project" value="UniProtKB-EC"/>
</dbReference>
<dbReference type="FunFam" id="1.10.510.10:FF:000408">
    <property type="entry name" value="Serine/threonine-protein kinase SSN3"/>
    <property type="match status" value="1"/>
</dbReference>
<dbReference type="FunFam" id="3.30.200.20:FF:000774">
    <property type="entry name" value="Serine/threonine-protein kinase SSN3"/>
    <property type="match status" value="1"/>
</dbReference>
<dbReference type="Gene3D" id="3.30.200.20">
    <property type="entry name" value="Phosphorylase Kinase, domain 1"/>
    <property type="match status" value="1"/>
</dbReference>
<dbReference type="Gene3D" id="1.10.510.10">
    <property type="entry name" value="Transferase(Phosphotransferase) domain 1"/>
    <property type="match status" value="1"/>
</dbReference>
<dbReference type="InterPro" id="IPR050108">
    <property type="entry name" value="CDK"/>
</dbReference>
<dbReference type="InterPro" id="IPR011009">
    <property type="entry name" value="Kinase-like_dom_sf"/>
</dbReference>
<dbReference type="InterPro" id="IPR000719">
    <property type="entry name" value="Prot_kinase_dom"/>
</dbReference>
<dbReference type="InterPro" id="IPR008271">
    <property type="entry name" value="Ser/Thr_kinase_AS"/>
</dbReference>
<dbReference type="PANTHER" id="PTHR24056">
    <property type="entry name" value="CELL DIVISION PROTEIN KINASE"/>
    <property type="match status" value="1"/>
</dbReference>
<dbReference type="PANTHER" id="PTHR24056:SF495">
    <property type="entry name" value="CYCLIN-DEPENDENT KINASE 8-RELATED"/>
    <property type="match status" value="1"/>
</dbReference>
<dbReference type="Pfam" id="PF00069">
    <property type="entry name" value="Pkinase"/>
    <property type="match status" value="1"/>
</dbReference>
<dbReference type="SMART" id="SM00220">
    <property type="entry name" value="S_TKc"/>
    <property type="match status" value="1"/>
</dbReference>
<dbReference type="SUPFAM" id="SSF56112">
    <property type="entry name" value="Protein kinase-like (PK-like)"/>
    <property type="match status" value="1"/>
</dbReference>
<dbReference type="PROSITE" id="PS50011">
    <property type="entry name" value="PROTEIN_KINASE_DOM"/>
    <property type="match status" value="1"/>
</dbReference>
<dbReference type="PROSITE" id="PS00108">
    <property type="entry name" value="PROTEIN_KINASE_ST"/>
    <property type="match status" value="1"/>
</dbReference>
<feature type="chain" id="PRO_0000312951" description="Serine/threonine-protein kinase SSN3">
    <location>
        <begin position="1"/>
        <end position="713"/>
    </location>
</feature>
<feature type="domain" description="Protein kinase" evidence="2">
    <location>
        <begin position="66"/>
        <end position="484"/>
    </location>
</feature>
<feature type="region of interest" description="Disordered" evidence="3">
    <location>
        <begin position="104"/>
        <end position="188"/>
    </location>
</feature>
<feature type="region of interest" description="Disordered" evidence="3">
    <location>
        <begin position="657"/>
        <end position="713"/>
    </location>
</feature>
<feature type="compositionally biased region" description="Low complexity" evidence="3">
    <location>
        <begin position="104"/>
        <end position="120"/>
    </location>
</feature>
<feature type="compositionally biased region" description="Polar residues" evidence="3">
    <location>
        <begin position="129"/>
        <end position="142"/>
    </location>
</feature>
<feature type="compositionally biased region" description="Low complexity" evidence="3">
    <location>
        <begin position="158"/>
        <end position="175"/>
    </location>
</feature>
<feature type="compositionally biased region" description="Polar residues" evidence="3">
    <location>
        <begin position="657"/>
        <end position="672"/>
    </location>
</feature>
<feature type="compositionally biased region" description="Low complexity" evidence="3">
    <location>
        <begin position="673"/>
        <end position="691"/>
    </location>
</feature>
<feature type="compositionally biased region" description="Polar residues" evidence="3">
    <location>
        <begin position="694"/>
        <end position="705"/>
    </location>
</feature>
<feature type="active site" description="Proton acceptor" evidence="2">
    <location>
        <position position="304"/>
    </location>
</feature>
<feature type="binding site" evidence="2">
    <location>
        <begin position="72"/>
        <end position="80"/>
    </location>
    <ligand>
        <name>ATP</name>
        <dbReference type="ChEBI" id="CHEBI:30616"/>
    </ligand>
</feature>
<feature type="binding site" evidence="2">
    <location>
        <position position="201"/>
    </location>
    <ligand>
        <name>ATP</name>
        <dbReference type="ChEBI" id="CHEBI:30616"/>
    </ligand>
</feature>
<evidence type="ECO:0000250" key="1"/>
<evidence type="ECO:0000255" key="2">
    <source>
        <dbReference type="PROSITE-ProRule" id="PRU00159"/>
    </source>
</evidence>
<evidence type="ECO:0000256" key="3">
    <source>
        <dbReference type="SAM" id="MobiDB-lite"/>
    </source>
</evidence>
<evidence type="ECO:0000305" key="4"/>
<sequence length="713" mass="77024">MSDQIRASGYFYSQTDDPFAAAFWSQFQDPHVLAARHIPADSSASAAMKAYREYRDRVRKPVLATYTILGFLSSGTYGRVYKARLRTPPQLASSSGTAGIANANAGTGSGTATVGSGASTAKKRGGLLQQHQLLDSPSSSLHATPKSVADGAGVGVNGTPSASPSLSASLGTSTANAPGGSDNTLQLSSNELPDTQIYAIKKFKPDSKETDATIYTGISQSAMREISLNRELSHVNIVTLHQVMLEDKAIYMVFEYAEHDLLQIIHYHSTALRAPIPLAVLKSLLWQLINGVAYLHANWILHRDLKPANILVTSQGVVKIGDLGLARLYSSPLQSLYNGDKVVVTIWYRAPELLLGARHYTTAIDMWSVGCIWGELLALRPMFKGEEAKMDPKTKAAPFQTDQLKRIVEVLGTPNKDRWPAIESMPDYKGWWPHLRLDNYPKTLSRWYATRNKGDDGYELFNSLLQYDPEQRLTANQALEHAWFTAQDPKPTANAFSSLAKPHATYPNRRVIQDDMDPKMKSNYVPPIKSHHMQPWHQVNLNSSQPHRLAQLMYQQEQMRHQQMQTQAPAPAPAQPPAATAVTGRLGHAVGAGSSAVGTAANVGGPAAPPPIAIGSTAGTGGAIGIQSSAASTAPSQHMYNNNPLITIAGTNGGTISNPATVRSSHSIGSTESITPTTSSQPIPAQPSSAPLARTTNLVATATRNQQRKRQRN</sequence>
<keyword id="KW-0010">Activator</keyword>
<keyword id="KW-0067">ATP-binding</keyword>
<keyword id="KW-0418">Kinase</keyword>
<keyword id="KW-0460">Magnesium</keyword>
<keyword id="KW-0479">Metal-binding</keyword>
<keyword id="KW-0547">Nucleotide-binding</keyword>
<keyword id="KW-0539">Nucleus</keyword>
<keyword id="KW-1185">Reference proteome</keyword>
<keyword id="KW-0678">Repressor</keyword>
<keyword id="KW-0723">Serine/threonine-protein kinase</keyword>
<keyword id="KW-0804">Transcription</keyword>
<keyword id="KW-0805">Transcription regulation</keyword>
<keyword id="KW-0808">Transferase</keyword>
<proteinExistence type="inferred from homology"/>